<protein>
    <recommendedName>
        <fullName evidence="1">RNA chaperone ProQ</fullName>
    </recommendedName>
</protein>
<gene>
    <name evidence="1" type="primary">proQ</name>
    <name type="ordered locus">Z2878</name>
    <name type="ordered locus">ECs2541</name>
</gene>
<name>PROQ_ECO57</name>
<feature type="chain" id="PRO_0000214615" description="RNA chaperone ProQ">
    <location>
        <begin position="1"/>
        <end position="232"/>
    </location>
</feature>
<feature type="region of interest" description="Disordered" evidence="2">
    <location>
        <begin position="105"/>
        <end position="182"/>
    </location>
</feature>
<feature type="compositionally biased region" description="Basic and acidic residues" evidence="2">
    <location>
        <begin position="117"/>
        <end position="136"/>
    </location>
</feature>
<feature type="compositionally biased region" description="Basic residues" evidence="2">
    <location>
        <begin position="137"/>
        <end position="146"/>
    </location>
</feature>
<feature type="compositionally biased region" description="Basic and acidic residues" evidence="2">
    <location>
        <begin position="147"/>
        <end position="177"/>
    </location>
</feature>
<reference key="1">
    <citation type="journal article" date="2001" name="Nature">
        <title>Genome sequence of enterohaemorrhagic Escherichia coli O157:H7.</title>
        <authorList>
            <person name="Perna N.T."/>
            <person name="Plunkett G. III"/>
            <person name="Burland V."/>
            <person name="Mau B."/>
            <person name="Glasner J.D."/>
            <person name="Rose D.J."/>
            <person name="Mayhew G.F."/>
            <person name="Evans P.S."/>
            <person name="Gregor J."/>
            <person name="Kirkpatrick H.A."/>
            <person name="Posfai G."/>
            <person name="Hackett J."/>
            <person name="Klink S."/>
            <person name="Boutin A."/>
            <person name="Shao Y."/>
            <person name="Miller L."/>
            <person name="Grotbeck E.J."/>
            <person name="Davis N.W."/>
            <person name="Lim A."/>
            <person name="Dimalanta E.T."/>
            <person name="Potamousis K."/>
            <person name="Apodaca J."/>
            <person name="Anantharaman T.S."/>
            <person name="Lin J."/>
            <person name="Yen G."/>
            <person name="Schwartz D.C."/>
            <person name="Welch R.A."/>
            <person name="Blattner F.R."/>
        </authorList>
    </citation>
    <scope>NUCLEOTIDE SEQUENCE [LARGE SCALE GENOMIC DNA]</scope>
    <source>
        <strain>O157:H7 / EDL933 / ATCC 700927 / EHEC</strain>
    </source>
</reference>
<reference key="2">
    <citation type="journal article" date="2001" name="DNA Res.">
        <title>Complete genome sequence of enterohemorrhagic Escherichia coli O157:H7 and genomic comparison with a laboratory strain K-12.</title>
        <authorList>
            <person name="Hayashi T."/>
            <person name="Makino K."/>
            <person name="Ohnishi M."/>
            <person name="Kurokawa K."/>
            <person name="Ishii K."/>
            <person name="Yokoyama K."/>
            <person name="Han C.-G."/>
            <person name="Ohtsubo E."/>
            <person name="Nakayama K."/>
            <person name="Murata T."/>
            <person name="Tanaka M."/>
            <person name="Tobe T."/>
            <person name="Iida T."/>
            <person name="Takami H."/>
            <person name="Honda T."/>
            <person name="Sasakawa C."/>
            <person name="Ogasawara N."/>
            <person name="Yasunaga T."/>
            <person name="Kuhara S."/>
            <person name="Shiba T."/>
            <person name="Hattori M."/>
            <person name="Shinagawa H."/>
        </authorList>
    </citation>
    <scope>NUCLEOTIDE SEQUENCE [LARGE SCALE GENOMIC DNA]</scope>
    <source>
        <strain>O157:H7 / Sakai / RIMD 0509952 / EHEC</strain>
    </source>
</reference>
<sequence length="232" mass="25834">MENQPKLNSSKEVIAFLAERFPHCFSAEGEARPLKIGIFQDLVDRVAGEMNLSKTQLRSALRLYTSSWRYLYGVKPGATRVDLDGNPCGELDEQHVEHARKQLEEAKARVQAQRAEQQAKKREAAAAAGEKEDAPRRERKPRPTTPRRKEGAERKPRAQKPVEKAPKTAKAPREEQHTPVSDISALTVGQALKVKAGQNAMDATVLEITKDGVRVQLNSGMSLIVRAEHLVF</sequence>
<proteinExistence type="inferred from homology"/>
<keyword id="KW-0143">Chaperone</keyword>
<keyword id="KW-0963">Cytoplasm</keyword>
<keyword id="KW-1185">Reference proteome</keyword>
<keyword id="KW-0694">RNA-binding</keyword>
<accession>Q8XCM4</accession>
<evidence type="ECO:0000255" key="1">
    <source>
        <dbReference type="HAMAP-Rule" id="MF_00749"/>
    </source>
</evidence>
<evidence type="ECO:0000256" key="2">
    <source>
        <dbReference type="SAM" id="MobiDB-lite"/>
    </source>
</evidence>
<evidence type="ECO:0000305" key="3"/>
<comment type="function">
    <text evidence="1">RNA chaperone with significant RNA binding, RNA strand exchange and RNA duplexing activities. May regulate ProP activity through an RNA-based, post-transcriptional mechanism.</text>
</comment>
<comment type="subcellular location">
    <subcellularLocation>
        <location evidence="1">Cytoplasm</location>
    </subcellularLocation>
</comment>
<comment type="similarity">
    <text evidence="1">Belongs to the ProQ family.</text>
</comment>
<comment type="sequence caution" evidence="3">
    <conflict type="erroneous initiation">
        <sequence resource="EMBL-CDS" id="AAG56821"/>
    </conflict>
</comment>
<dbReference type="EMBL" id="AE005174">
    <property type="protein sequence ID" value="AAG56821.1"/>
    <property type="status" value="ALT_INIT"/>
    <property type="molecule type" value="Genomic_DNA"/>
</dbReference>
<dbReference type="EMBL" id="BA000007">
    <property type="protein sequence ID" value="BAB35964.1"/>
    <property type="molecule type" value="Genomic_DNA"/>
</dbReference>
<dbReference type="PIR" id="A85795">
    <property type="entry name" value="A85795"/>
</dbReference>
<dbReference type="PIR" id="E90946">
    <property type="entry name" value="E90946"/>
</dbReference>
<dbReference type="RefSeq" id="NP_310568.1">
    <property type="nucleotide sequence ID" value="NC_002695.1"/>
</dbReference>
<dbReference type="RefSeq" id="WP_000431368.1">
    <property type="nucleotide sequence ID" value="NZ_VOAI01000010.1"/>
</dbReference>
<dbReference type="SMR" id="Q8XCM4"/>
<dbReference type="STRING" id="155864.Z2878"/>
<dbReference type="GeneID" id="75171902"/>
<dbReference type="GeneID" id="912783"/>
<dbReference type="KEGG" id="ece:Z2878"/>
<dbReference type="KEGG" id="ecs:ECs_2541"/>
<dbReference type="PATRIC" id="fig|386585.9.peg.2664"/>
<dbReference type="eggNOG" id="COG3109">
    <property type="taxonomic scope" value="Bacteria"/>
</dbReference>
<dbReference type="HOGENOM" id="CLU_113254_0_0_6"/>
<dbReference type="OMA" id="WRYLKGV"/>
<dbReference type="Proteomes" id="UP000000558">
    <property type="component" value="Chromosome"/>
</dbReference>
<dbReference type="Proteomes" id="UP000002519">
    <property type="component" value="Chromosome"/>
</dbReference>
<dbReference type="GO" id="GO:0005829">
    <property type="term" value="C:cytosol"/>
    <property type="evidence" value="ECO:0007669"/>
    <property type="project" value="TreeGrafter"/>
</dbReference>
<dbReference type="GO" id="GO:0033592">
    <property type="term" value="F:RNA strand annealing activity"/>
    <property type="evidence" value="ECO:0007669"/>
    <property type="project" value="UniProtKB-UniRule"/>
</dbReference>
<dbReference type="GO" id="GO:0034057">
    <property type="term" value="F:RNA strand-exchange activity"/>
    <property type="evidence" value="ECO:0007669"/>
    <property type="project" value="UniProtKB-UniRule"/>
</dbReference>
<dbReference type="GO" id="GO:0010608">
    <property type="term" value="P:post-transcriptional regulation of gene expression"/>
    <property type="evidence" value="ECO:0007669"/>
    <property type="project" value="InterPro"/>
</dbReference>
<dbReference type="FunFam" id="1.10.1710.10:FF:000001">
    <property type="entry name" value="RNA chaperone ProQ"/>
    <property type="match status" value="1"/>
</dbReference>
<dbReference type="Gene3D" id="1.10.1710.10">
    <property type="entry name" value="ProQ/FinO domain"/>
    <property type="match status" value="1"/>
</dbReference>
<dbReference type="HAMAP" id="MF_00749">
    <property type="entry name" value="ProQ"/>
    <property type="match status" value="1"/>
</dbReference>
<dbReference type="InterPro" id="IPR023529">
    <property type="entry name" value="ProQ"/>
</dbReference>
<dbReference type="InterPro" id="IPR016103">
    <property type="entry name" value="ProQ/FinO"/>
</dbReference>
<dbReference type="InterPro" id="IPR036442">
    <property type="entry name" value="ProQ/FinO_sf"/>
</dbReference>
<dbReference type="InterPro" id="IPR035236">
    <property type="entry name" value="ProQ_C"/>
</dbReference>
<dbReference type="NCBIfam" id="NF003434">
    <property type="entry name" value="PRK04950.1"/>
    <property type="match status" value="1"/>
</dbReference>
<dbReference type="PANTHER" id="PTHR38106">
    <property type="entry name" value="RNA CHAPERONE PROQ"/>
    <property type="match status" value="1"/>
</dbReference>
<dbReference type="PANTHER" id="PTHR38106:SF1">
    <property type="entry name" value="RNA CHAPERONE PROQ"/>
    <property type="match status" value="1"/>
</dbReference>
<dbReference type="Pfam" id="PF04352">
    <property type="entry name" value="ProQ"/>
    <property type="match status" value="1"/>
</dbReference>
<dbReference type="Pfam" id="PF17516">
    <property type="entry name" value="ProQ_C"/>
    <property type="match status" value="1"/>
</dbReference>
<dbReference type="SMART" id="SM00945">
    <property type="entry name" value="ProQ"/>
    <property type="match status" value="1"/>
</dbReference>
<dbReference type="SUPFAM" id="SSF48657">
    <property type="entry name" value="FinO-like"/>
    <property type="match status" value="1"/>
</dbReference>
<organism>
    <name type="scientific">Escherichia coli O157:H7</name>
    <dbReference type="NCBI Taxonomy" id="83334"/>
    <lineage>
        <taxon>Bacteria</taxon>
        <taxon>Pseudomonadati</taxon>
        <taxon>Pseudomonadota</taxon>
        <taxon>Gammaproteobacteria</taxon>
        <taxon>Enterobacterales</taxon>
        <taxon>Enterobacteriaceae</taxon>
        <taxon>Escherichia</taxon>
    </lineage>
</organism>